<accession>Q5PR19</accession>
<sequence>MAPAPVPALGTLGCYRFLFNPRQHLGPSFPARRYGAPRRLCFLPQNTGTPLRVLPSVFWSPPSRKKPVLSARNSRMFGHLSPVRIPHLRGKFNLRLPSLDEQVIPARLPKMEVRAEEPKEATEVKDQVETQEQEDNKRGPCSNGEAASTSRPLETQGNPTSPRYNPRPLEGNVQLKSLTENNQTDKAQVHAVSFYSKGHGVASSHSPAGGFPRGRTPPARQHG</sequence>
<comment type="similarity">
    <text evidence="2">Belongs to the UPF0607 family.</text>
</comment>
<name>YI024_HUMAN</name>
<dbReference type="EMBL" id="AL772337">
    <property type="status" value="NOT_ANNOTATED_CDS"/>
    <property type="molecule type" value="Genomic_DNA"/>
</dbReference>
<dbReference type="EMBL" id="BC086877">
    <property type="status" value="NOT_ANNOTATED_CDS"/>
    <property type="molecule type" value="mRNA"/>
</dbReference>
<dbReference type="IntAct" id="Q5PR19">
    <property type="interactions" value="1"/>
</dbReference>
<dbReference type="BioMuta" id="-"/>
<dbReference type="DMDM" id="306526264"/>
<dbReference type="MassIVE" id="Q5PR19"/>
<dbReference type="AGR" id="HGNC:56659"/>
<dbReference type="neXtProt" id="NX_Q5PR19"/>
<dbReference type="InParanoid" id="Q5PR19"/>
<dbReference type="PAN-GO" id="Q5PR19">
    <property type="GO annotations" value="4 GO annotations based on evolutionary models"/>
</dbReference>
<dbReference type="PhylomeDB" id="Q5PR19"/>
<dbReference type="PathwayCommons" id="Q5PR19"/>
<dbReference type="Pharos" id="Q5PR19">
    <property type="development level" value="Tdark"/>
</dbReference>
<dbReference type="Proteomes" id="UP000005640">
    <property type="component" value="Unplaced"/>
</dbReference>
<dbReference type="RNAct" id="Q5PR19">
    <property type="molecule type" value="protein"/>
</dbReference>
<dbReference type="InterPro" id="IPR043220">
    <property type="entry name" value="POM121-like_prot_1"/>
</dbReference>
<dbReference type="PANTHER" id="PTHR15566">
    <property type="entry name" value="POM121-LIKE"/>
    <property type="match status" value="1"/>
</dbReference>
<dbReference type="PANTHER" id="PTHR15566:SF7">
    <property type="entry name" value="UPF0607 PROTEIN ENSP00000332738-RELATED"/>
    <property type="match status" value="1"/>
</dbReference>
<dbReference type="Pfam" id="PF15229">
    <property type="entry name" value="POM121"/>
    <property type="match status" value="1"/>
</dbReference>
<keyword id="KW-1185">Reference proteome</keyword>
<protein>
    <recommendedName>
        <fullName>Putative UPF0607 protein LOC392364</fullName>
    </recommendedName>
</protein>
<evidence type="ECO:0000256" key="1">
    <source>
        <dbReference type="SAM" id="MobiDB-lite"/>
    </source>
</evidence>
<evidence type="ECO:0000305" key="2"/>
<feature type="chain" id="PRO_0000337033" description="Putative UPF0607 protein LOC392364">
    <location>
        <begin position="1"/>
        <end position="223"/>
    </location>
</feature>
<feature type="region of interest" description="Disordered" evidence="1">
    <location>
        <begin position="110"/>
        <end position="223"/>
    </location>
</feature>
<feature type="compositionally biased region" description="Basic and acidic residues" evidence="1">
    <location>
        <begin position="110"/>
        <end position="138"/>
    </location>
</feature>
<feature type="compositionally biased region" description="Polar residues" evidence="1">
    <location>
        <begin position="145"/>
        <end position="163"/>
    </location>
</feature>
<feature type="compositionally biased region" description="Polar residues" evidence="1">
    <location>
        <begin position="174"/>
        <end position="186"/>
    </location>
</feature>
<feature type="sequence conflict" description="In Ref. 2; BC086877." evidence="2" ref="2">
    <original>R</original>
    <variation>G</variation>
    <location>
        <position position="213"/>
    </location>
</feature>
<reference key="1">
    <citation type="journal article" date="2004" name="Nature">
        <title>DNA sequence and analysis of human chromosome 9.</title>
        <authorList>
            <person name="Humphray S.J."/>
            <person name="Oliver K."/>
            <person name="Hunt A.R."/>
            <person name="Plumb R.W."/>
            <person name="Loveland J.E."/>
            <person name="Howe K.L."/>
            <person name="Andrews T.D."/>
            <person name="Searle S."/>
            <person name="Hunt S.E."/>
            <person name="Scott C.E."/>
            <person name="Jones M.C."/>
            <person name="Ainscough R."/>
            <person name="Almeida J.P."/>
            <person name="Ambrose K.D."/>
            <person name="Ashwell R.I.S."/>
            <person name="Babbage A.K."/>
            <person name="Babbage S."/>
            <person name="Bagguley C.L."/>
            <person name="Bailey J."/>
            <person name="Banerjee R."/>
            <person name="Barker D.J."/>
            <person name="Barlow K.F."/>
            <person name="Bates K."/>
            <person name="Beasley H."/>
            <person name="Beasley O."/>
            <person name="Bird C.P."/>
            <person name="Bray-Allen S."/>
            <person name="Brown A.J."/>
            <person name="Brown J.Y."/>
            <person name="Burford D."/>
            <person name="Burrill W."/>
            <person name="Burton J."/>
            <person name="Carder C."/>
            <person name="Carter N.P."/>
            <person name="Chapman J.C."/>
            <person name="Chen Y."/>
            <person name="Clarke G."/>
            <person name="Clark S.Y."/>
            <person name="Clee C.M."/>
            <person name="Clegg S."/>
            <person name="Collier R.E."/>
            <person name="Corby N."/>
            <person name="Crosier M."/>
            <person name="Cummings A.T."/>
            <person name="Davies J."/>
            <person name="Dhami P."/>
            <person name="Dunn M."/>
            <person name="Dutta I."/>
            <person name="Dyer L.W."/>
            <person name="Earthrowl M.E."/>
            <person name="Faulkner L."/>
            <person name="Fleming C.J."/>
            <person name="Frankish A."/>
            <person name="Frankland J.A."/>
            <person name="French L."/>
            <person name="Fricker D.G."/>
            <person name="Garner P."/>
            <person name="Garnett J."/>
            <person name="Ghori J."/>
            <person name="Gilbert J.G.R."/>
            <person name="Glison C."/>
            <person name="Grafham D.V."/>
            <person name="Gribble S."/>
            <person name="Griffiths C."/>
            <person name="Griffiths-Jones S."/>
            <person name="Grocock R."/>
            <person name="Guy J."/>
            <person name="Hall R.E."/>
            <person name="Hammond S."/>
            <person name="Harley J.L."/>
            <person name="Harrison E.S.I."/>
            <person name="Hart E.A."/>
            <person name="Heath P.D."/>
            <person name="Henderson C.D."/>
            <person name="Hopkins B.L."/>
            <person name="Howard P.J."/>
            <person name="Howden P.J."/>
            <person name="Huckle E."/>
            <person name="Johnson C."/>
            <person name="Johnson D."/>
            <person name="Joy A.A."/>
            <person name="Kay M."/>
            <person name="Keenan S."/>
            <person name="Kershaw J.K."/>
            <person name="Kimberley A.M."/>
            <person name="King A."/>
            <person name="Knights A."/>
            <person name="Laird G.K."/>
            <person name="Langford C."/>
            <person name="Lawlor S."/>
            <person name="Leongamornlert D.A."/>
            <person name="Leversha M."/>
            <person name="Lloyd C."/>
            <person name="Lloyd D.M."/>
            <person name="Lovell J."/>
            <person name="Martin S."/>
            <person name="Mashreghi-Mohammadi M."/>
            <person name="Matthews L."/>
            <person name="McLaren S."/>
            <person name="McLay K.E."/>
            <person name="McMurray A."/>
            <person name="Milne S."/>
            <person name="Nickerson T."/>
            <person name="Nisbett J."/>
            <person name="Nordsiek G."/>
            <person name="Pearce A.V."/>
            <person name="Peck A.I."/>
            <person name="Porter K.M."/>
            <person name="Pandian R."/>
            <person name="Pelan S."/>
            <person name="Phillimore B."/>
            <person name="Povey S."/>
            <person name="Ramsey Y."/>
            <person name="Rand V."/>
            <person name="Scharfe M."/>
            <person name="Sehra H.K."/>
            <person name="Shownkeen R."/>
            <person name="Sims S.K."/>
            <person name="Skuce C.D."/>
            <person name="Smith M."/>
            <person name="Steward C.A."/>
            <person name="Swarbreck D."/>
            <person name="Sycamore N."/>
            <person name="Tester J."/>
            <person name="Thorpe A."/>
            <person name="Tracey A."/>
            <person name="Tromans A."/>
            <person name="Thomas D.W."/>
            <person name="Wall M."/>
            <person name="Wallis J.M."/>
            <person name="West A.P."/>
            <person name="Whitehead S.L."/>
            <person name="Willey D.L."/>
            <person name="Williams S.A."/>
            <person name="Wilming L."/>
            <person name="Wray P.W."/>
            <person name="Young L."/>
            <person name="Ashurst J.L."/>
            <person name="Coulson A."/>
            <person name="Blocker H."/>
            <person name="Durbin R.M."/>
            <person name="Sulston J.E."/>
            <person name="Hubbard T."/>
            <person name="Jackson M.J."/>
            <person name="Bentley D.R."/>
            <person name="Beck S."/>
            <person name="Rogers J."/>
            <person name="Dunham I."/>
        </authorList>
    </citation>
    <scope>NUCLEOTIDE SEQUENCE [LARGE SCALE GENOMIC DNA]</scope>
</reference>
<reference key="2">
    <citation type="journal article" date="2004" name="Genome Res.">
        <title>The status, quality, and expansion of the NIH full-length cDNA project: the Mammalian Gene Collection (MGC).</title>
        <authorList>
            <consortium name="The MGC Project Team"/>
        </authorList>
    </citation>
    <scope>NUCLEOTIDE SEQUENCE [LARGE SCALE MRNA]</scope>
    <source>
        <tissue>Chondrosarcoma</tissue>
    </source>
</reference>
<organism>
    <name type="scientific">Homo sapiens</name>
    <name type="common">Human</name>
    <dbReference type="NCBI Taxonomy" id="9606"/>
    <lineage>
        <taxon>Eukaryota</taxon>
        <taxon>Metazoa</taxon>
        <taxon>Chordata</taxon>
        <taxon>Craniata</taxon>
        <taxon>Vertebrata</taxon>
        <taxon>Euteleostomi</taxon>
        <taxon>Mammalia</taxon>
        <taxon>Eutheria</taxon>
        <taxon>Euarchontoglires</taxon>
        <taxon>Primates</taxon>
        <taxon>Haplorrhini</taxon>
        <taxon>Catarrhini</taxon>
        <taxon>Hominidae</taxon>
        <taxon>Homo</taxon>
    </lineage>
</organism>
<proteinExistence type="evidence at transcript level"/>